<keyword id="KW-0119">Carbohydrate metabolism</keyword>
<keyword id="KW-0963">Cytoplasm</keyword>
<keyword id="KW-0378">Hydrolase</keyword>
<keyword id="KW-0460">Magnesium</keyword>
<keyword id="KW-0479">Metal-binding</keyword>
<comment type="catalytic activity">
    <reaction evidence="1">
        <text>beta-D-fructose 1,6-bisphosphate + H2O = beta-D-fructose 6-phosphate + phosphate</text>
        <dbReference type="Rhea" id="RHEA:11064"/>
        <dbReference type="ChEBI" id="CHEBI:15377"/>
        <dbReference type="ChEBI" id="CHEBI:32966"/>
        <dbReference type="ChEBI" id="CHEBI:43474"/>
        <dbReference type="ChEBI" id="CHEBI:57634"/>
        <dbReference type="EC" id="3.1.3.11"/>
    </reaction>
</comment>
<comment type="cofactor">
    <cofactor evidence="1">
        <name>Mg(2+)</name>
        <dbReference type="ChEBI" id="CHEBI:18420"/>
    </cofactor>
    <text evidence="1">Binds 2 magnesium ions per subunit.</text>
</comment>
<comment type="pathway">
    <text evidence="1">Carbohydrate biosynthesis; gluconeogenesis.</text>
</comment>
<comment type="subunit">
    <text evidence="1">Homotetramer.</text>
</comment>
<comment type="subcellular location">
    <subcellularLocation>
        <location evidence="1">Cytoplasm</location>
    </subcellularLocation>
</comment>
<comment type="similarity">
    <text evidence="1">Belongs to the FBPase class 1 family.</text>
</comment>
<accession>B0SHG0</accession>
<organism>
    <name type="scientific">Leptospira biflexa serovar Patoc (strain Patoc 1 / Ames)</name>
    <dbReference type="NCBI Taxonomy" id="355278"/>
    <lineage>
        <taxon>Bacteria</taxon>
        <taxon>Pseudomonadati</taxon>
        <taxon>Spirochaetota</taxon>
        <taxon>Spirochaetia</taxon>
        <taxon>Leptospirales</taxon>
        <taxon>Leptospiraceae</taxon>
        <taxon>Leptospira</taxon>
    </lineage>
</organism>
<proteinExistence type="inferred from homology"/>
<name>F16PA_LEPBA</name>
<gene>
    <name evidence="1" type="primary">fbp</name>
    <name type="ordered locus">LBF_1510</name>
</gene>
<protein>
    <recommendedName>
        <fullName evidence="1">Fructose-1,6-bisphosphatase class 1</fullName>
        <shortName evidence="1">FBPase class 1</shortName>
        <ecNumber evidence="1">3.1.3.11</ecNumber>
    </recommendedName>
    <alternativeName>
        <fullName evidence="1">D-fructose-1,6-bisphosphate 1-phosphohydrolase class 1</fullName>
    </alternativeName>
</protein>
<feature type="chain" id="PRO_0000364584" description="Fructose-1,6-bisphosphatase class 1">
    <location>
        <begin position="1"/>
        <end position="343"/>
    </location>
</feature>
<feature type="binding site" evidence="1">
    <location>
        <position position="99"/>
    </location>
    <ligand>
        <name>Mg(2+)</name>
        <dbReference type="ChEBI" id="CHEBI:18420"/>
        <label>1</label>
    </ligand>
</feature>
<feature type="binding site" evidence="1">
    <location>
        <position position="121"/>
    </location>
    <ligand>
        <name>Mg(2+)</name>
        <dbReference type="ChEBI" id="CHEBI:18420"/>
        <label>1</label>
    </ligand>
</feature>
<feature type="binding site" evidence="1">
    <location>
        <position position="121"/>
    </location>
    <ligand>
        <name>Mg(2+)</name>
        <dbReference type="ChEBI" id="CHEBI:18420"/>
        <label>2</label>
    </ligand>
</feature>
<feature type="binding site" evidence="1">
    <location>
        <position position="123"/>
    </location>
    <ligand>
        <name>Mg(2+)</name>
        <dbReference type="ChEBI" id="CHEBI:18420"/>
        <label>1</label>
    </ligand>
</feature>
<feature type="binding site" evidence="1">
    <location>
        <begin position="124"/>
        <end position="127"/>
    </location>
    <ligand>
        <name>substrate</name>
    </ligand>
</feature>
<feature type="binding site" evidence="1">
    <location>
        <position position="124"/>
    </location>
    <ligand>
        <name>Mg(2+)</name>
        <dbReference type="ChEBI" id="CHEBI:18420"/>
        <label>2</label>
    </ligand>
</feature>
<feature type="binding site" evidence="1">
    <location>
        <position position="218"/>
    </location>
    <ligand>
        <name>substrate</name>
    </ligand>
</feature>
<feature type="binding site" evidence="1">
    <location>
        <position position="250"/>
    </location>
    <ligand>
        <name>substrate</name>
    </ligand>
</feature>
<feature type="binding site" evidence="1">
    <location>
        <position position="283"/>
    </location>
    <ligand>
        <name>substrate</name>
    </ligand>
</feature>
<feature type="binding site" evidence="1">
    <location>
        <position position="289"/>
    </location>
    <ligand>
        <name>Mg(2+)</name>
        <dbReference type="ChEBI" id="CHEBI:18420"/>
        <label>2</label>
    </ligand>
</feature>
<sequence>MNATPKQKKLISLSQFILEEQLKIPHASGEFSALLSHLVYAAKIVGREVRKAGLLDDILGATEDTNVQGETQMKLDQYADNAFNQSLKICGHLCVLASEEHEDIIPIPGGYNIGKYTMAIDPLDGSSNIDTNVSIGTIFSIHQRLEPNSKEPGNERDLLQKGHLQRCAGYIIYGSSTMLVLSTGKGVSGFTLDPSVGEFLLSHPNMQMPESGDIYSANEGNASYWSPEVQAYLQKIKSIEGGKKPKTARYIGSLVADFHRNLLKGGIFLYPNDTKSSKYPNGKLRLLYEAAPMAFIAEQAGGMAVTVKGERILDLTPKDLHERTTLIIGSKKEVEEFLTFVAK</sequence>
<dbReference type="EC" id="3.1.3.11" evidence="1"/>
<dbReference type="EMBL" id="CP000777">
    <property type="protein sequence ID" value="ABZ94021.1"/>
    <property type="molecule type" value="Genomic_DNA"/>
</dbReference>
<dbReference type="RefSeq" id="WP_012476257.1">
    <property type="nucleotide sequence ID" value="NC_010842.1"/>
</dbReference>
<dbReference type="SMR" id="B0SHG0"/>
<dbReference type="KEGG" id="lbf:LBF_1510"/>
<dbReference type="HOGENOM" id="CLU_039977_2_2_12"/>
<dbReference type="UniPathway" id="UPA00138"/>
<dbReference type="GO" id="GO:0005829">
    <property type="term" value="C:cytosol"/>
    <property type="evidence" value="ECO:0007669"/>
    <property type="project" value="TreeGrafter"/>
</dbReference>
<dbReference type="GO" id="GO:0042132">
    <property type="term" value="F:fructose 1,6-bisphosphate 1-phosphatase activity"/>
    <property type="evidence" value="ECO:0007669"/>
    <property type="project" value="UniProtKB-UniRule"/>
</dbReference>
<dbReference type="GO" id="GO:0000287">
    <property type="term" value="F:magnesium ion binding"/>
    <property type="evidence" value="ECO:0007669"/>
    <property type="project" value="UniProtKB-UniRule"/>
</dbReference>
<dbReference type="GO" id="GO:0030388">
    <property type="term" value="P:fructose 1,6-bisphosphate metabolic process"/>
    <property type="evidence" value="ECO:0007669"/>
    <property type="project" value="TreeGrafter"/>
</dbReference>
<dbReference type="GO" id="GO:0006002">
    <property type="term" value="P:fructose 6-phosphate metabolic process"/>
    <property type="evidence" value="ECO:0007669"/>
    <property type="project" value="TreeGrafter"/>
</dbReference>
<dbReference type="GO" id="GO:0006000">
    <property type="term" value="P:fructose metabolic process"/>
    <property type="evidence" value="ECO:0007669"/>
    <property type="project" value="TreeGrafter"/>
</dbReference>
<dbReference type="GO" id="GO:0006094">
    <property type="term" value="P:gluconeogenesis"/>
    <property type="evidence" value="ECO:0007669"/>
    <property type="project" value="UniProtKB-UniRule"/>
</dbReference>
<dbReference type="GO" id="GO:0005986">
    <property type="term" value="P:sucrose biosynthetic process"/>
    <property type="evidence" value="ECO:0007669"/>
    <property type="project" value="TreeGrafter"/>
</dbReference>
<dbReference type="CDD" id="cd00354">
    <property type="entry name" value="FBPase"/>
    <property type="match status" value="1"/>
</dbReference>
<dbReference type="FunFam" id="3.30.540.10:FF:000002">
    <property type="entry name" value="Fructose-1,6-bisphosphatase class 1"/>
    <property type="match status" value="1"/>
</dbReference>
<dbReference type="FunFam" id="3.40.190.80:FF:000001">
    <property type="entry name" value="Fructose-1,6-bisphosphatase class 1"/>
    <property type="match status" value="1"/>
</dbReference>
<dbReference type="Gene3D" id="3.40.190.80">
    <property type="match status" value="1"/>
</dbReference>
<dbReference type="Gene3D" id="3.30.540.10">
    <property type="entry name" value="Fructose-1,6-Bisphosphatase, subunit A, domain 1"/>
    <property type="match status" value="1"/>
</dbReference>
<dbReference type="HAMAP" id="MF_01855">
    <property type="entry name" value="FBPase_class1"/>
    <property type="match status" value="1"/>
</dbReference>
<dbReference type="InterPro" id="IPR044015">
    <property type="entry name" value="FBPase_C_dom"/>
</dbReference>
<dbReference type="InterPro" id="IPR000146">
    <property type="entry name" value="FBPase_class-1"/>
</dbReference>
<dbReference type="InterPro" id="IPR033391">
    <property type="entry name" value="FBPase_N"/>
</dbReference>
<dbReference type="InterPro" id="IPR028343">
    <property type="entry name" value="FBPtase"/>
</dbReference>
<dbReference type="InterPro" id="IPR020548">
    <property type="entry name" value="Fructose_bisphosphatase_AS"/>
</dbReference>
<dbReference type="NCBIfam" id="NF006778">
    <property type="entry name" value="PRK09293.1-1"/>
    <property type="match status" value="1"/>
</dbReference>
<dbReference type="PANTHER" id="PTHR11556">
    <property type="entry name" value="FRUCTOSE-1,6-BISPHOSPHATASE-RELATED"/>
    <property type="match status" value="1"/>
</dbReference>
<dbReference type="PANTHER" id="PTHR11556:SF35">
    <property type="entry name" value="SEDOHEPTULOSE-1,7-BISPHOSPHATASE, CHLOROPLASTIC"/>
    <property type="match status" value="1"/>
</dbReference>
<dbReference type="Pfam" id="PF00316">
    <property type="entry name" value="FBPase"/>
    <property type="match status" value="1"/>
</dbReference>
<dbReference type="Pfam" id="PF18913">
    <property type="entry name" value="FBPase_C"/>
    <property type="match status" value="1"/>
</dbReference>
<dbReference type="PIRSF" id="PIRSF500210">
    <property type="entry name" value="FBPtase"/>
    <property type="match status" value="1"/>
</dbReference>
<dbReference type="PIRSF" id="PIRSF000904">
    <property type="entry name" value="FBPtase_SBPase"/>
    <property type="match status" value="1"/>
</dbReference>
<dbReference type="PRINTS" id="PR00115">
    <property type="entry name" value="F16BPHPHTASE"/>
</dbReference>
<dbReference type="SUPFAM" id="SSF56655">
    <property type="entry name" value="Carbohydrate phosphatase"/>
    <property type="match status" value="1"/>
</dbReference>
<dbReference type="PROSITE" id="PS00124">
    <property type="entry name" value="FBPASE"/>
    <property type="match status" value="1"/>
</dbReference>
<reference key="1">
    <citation type="journal article" date="2008" name="PLoS ONE">
        <title>Genome sequence of the saprophyte Leptospira biflexa provides insights into the evolution of Leptospira and the pathogenesis of leptospirosis.</title>
        <authorList>
            <person name="Picardeau M."/>
            <person name="Bulach D.M."/>
            <person name="Bouchier C."/>
            <person name="Zuerner R.L."/>
            <person name="Zidane N."/>
            <person name="Wilson P.J."/>
            <person name="Creno S."/>
            <person name="Kuczek E.S."/>
            <person name="Bommezzadri S."/>
            <person name="Davis J.C."/>
            <person name="McGrath A."/>
            <person name="Johnson M.J."/>
            <person name="Boursaux-Eude C."/>
            <person name="Seemann T."/>
            <person name="Rouy Z."/>
            <person name="Coppel R.L."/>
            <person name="Rood J.I."/>
            <person name="Lajus A."/>
            <person name="Davies J.K."/>
            <person name="Medigue C."/>
            <person name="Adler B."/>
        </authorList>
    </citation>
    <scope>NUCLEOTIDE SEQUENCE [LARGE SCALE GENOMIC DNA]</scope>
    <source>
        <strain>Patoc 1 / Ames</strain>
    </source>
</reference>
<evidence type="ECO:0000255" key="1">
    <source>
        <dbReference type="HAMAP-Rule" id="MF_01855"/>
    </source>
</evidence>